<accession>Q74CI1</accession>
<sequence>MGARRLGRELALQMLYSRDYAAGEAAPLLELVLDESEPGAAAGRSFADDLVRGVLEHRQEIDTAITGASKNWSIGRMARVDLSILRMAMYELLFRSDIPKNVTINEAIEVAKKFGTEDSPAFINGILDEIASTLPDKG</sequence>
<protein>
    <recommendedName>
        <fullName evidence="1">Transcription antitermination protein NusB</fullName>
    </recommendedName>
    <alternativeName>
        <fullName evidence="1">Antitermination factor NusB</fullName>
    </alternativeName>
</protein>
<comment type="function">
    <text evidence="1">Involved in transcription antitermination. Required for transcription of ribosomal RNA (rRNA) genes. Binds specifically to the boxA antiterminator sequence of the ribosomal RNA (rrn) operons.</text>
</comment>
<comment type="similarity">
    <text evidence="1">Belongs to the NusB family.</text>
</comment>
<gene>
    <name evidence="1" type="primary">nusB</name>
    <name type="ordered locus">GSU1692</name>
</gene>
<keyword id="KW-1185">Reference proteome</keyword>
<keyword id="KW-0694">RNA-binding</keyword>
<keyword id="KW-0804">Transcription</keyword>
<keyword id="KW-0889">Transcription antitermination</keyword>
<keyword id="KW-0805">Transcription regulation</keyword>
<name>NUSB_GEOSL</name>
<evidence type="ECO:0000255" key="1">
    <source>
        <dbReference type="HAMAP-Rule" id="MF_00073"/>
    </source>
</evidence>
<dbReference type="EMBL" id="AE017180">
    <property type="protein sequence ID" value="AAR35070.1"/>
    <property type="molecule type" value="Genomic_DNA"/>
</dbReference>
<dbReference type="RefSeq" id="NP_952743.1">
    <property type="nucleotide sequence ID" value="NC_002939.5"/>
</dbReference>
<dbReference type="RefSeq" id="WP_010942335.1">
    <property type="nucleotide sequence ID" value="NC_002939.5"/>
</dbReference>
<dbReference type="SMR" id="Q74CI1"/>
<dbReference type="FunCoup" id="Q74CI1">
    <property type="interactions" value="382"/>
</dbReference>
<dbReference type="STRING" id="243231.GSU1692"/>
<dbReference type="EnsemblBacteria" id="AAR35070">
    <property type="protein sequence ID" value="AAR35070"/>
    <property type="gene ID" value="GSU1692"/>
</dbReference>
<dbReference type="KEGG" id="gsu:GSU1692"/>
<dbReference type="PATRIC" id="fig|243231.5.peg.1734"/>
<dbReference type="eggNOG" id="COG0781">
    <property type="taxonomic scope" value="Bacteria"/>
</dbReference>
<dbReference type="HOGENOM" id="CLU_087843_3_3_7"/>
<dbReference type="InParanoid" id="Q74CI1"/>
<dbReference type="OrthoDB" id="9797817at2"/>
<dbReference type="Proteomes" id="UP000000577">
    <property type="component" value="Chromosome"/>
</dbReference>
<dbReference type="GO" id="GO:0005829">
    <property type="term" value="C:cytosol"/>
    <property type="evidence" value="ECO:0000318"/>
    <property type="project" value="GO_Central"/>
</dbReference>
<dbReference type="GO" id="GO:0003723">
    <property type="term" value="F:RNA binding"/>
    <property type="evidence" value="ECO:0007669"/>
    <property type="project" value="UniProtKB-UniRule"/>
</dbReference>
<dbReference type="GO" id="GO:0006353">
    <property type="term" value="P:DNA-templated transcription termination"/>
    <property type="evidence" value="ECO:0007669"/>
    <property type="project" value="UniProtKB-UniRule"/>
</dbReference>
<dbReference type="GO" id="GO:0031564">
    <property type="term" value="P:transcription antitermination"/>
    <property type="evidence" value="ECO:0007669"/>
    <property type="project" value="UniProtKB-KW"/>
</dbReference>
<dbReference type="CDD" id="cd00619">
    <property type="entry name" value="Terminator_NusB"/>
    <property type="match status" value="1"/>
</dbReference>
<dbReference type="Gene3D" id="1.10.940.10">
    <property type="entry name" value="NusB-like"/>
    <property type="match status" value="1"/>
</dbReference>
<dbReference type="HAMAP" id="MF_00073">
    <property type="entry name" value="NusB"/>
    <property type="match status" value="1"/>
</dbReference>
<dbReference type="InterPro" id="IPR035926">
    <property type="entry name" value="NusB-like_sf"/>
</dbReference>
<dbReference type="InterPro" id="IPR011605">
    <property type="entry name" value="NusB_fam"/>
</dbReference>
<dbReference type="InterPro" id="IPR006027">
    <property type="entry name" value="NusB_RsmB_TIM44"/>
</dbReference>
<dbReference type="NCBIfam" id="TIGR01951">
    <property type="entry name" value="nusB"/>
    <property type="match status" value="1"/>
</dbReference>
<dbReference type="PANTHER" id="PTHR11078:SF3">
    <property type="entry name" value="ANTITERMINATION NUSB DOMAIN-CONTAINING PROTEIN"/>
    <property type="match status" value="1"/>
</dbReference>
<dbReference type="PANTHER" id="PTHR11078">
    <property type="entry name" value="N UTILIZATION SUBSTANCE PROTEIN B-RELATED"/>
    <property type="match status" value="1"/>
</dbReference>
<dbReference type="Pfam" id="PF01029">
    <property type="entry name" value="NusB"/>
    <property type="match status" value="1"/>
</dbReference>
<dbReference type="SUPFAM" id="SSF48013">
    <property type="entry name" value="NusB-like"/>
    <property type="match status" value="1"/>
</dbReference>
<organism>
    <name type="scientific">Geobacter sulfurreducens (strain ATCC 51573 / DSM 12127 / PCA)</name>
    <dbReference type="NCBI Taxonomy" id="243231"/>
    <lineage>
        <taxon>Bacteria</taxon>
        <taxon>Pseudomonadati</taxon>
        <taxon>Thermodesulfobacteriota</taxon>
        <taxon>Desulfuromonadia</taxon>
        <taxon>Geobacterales</taxon>
        <taxon>Geobacteraceae</taxon>
        <taxon>Geobacter</taxon>
    </lineage>
</organism>
<proteinExistence type="inferred from homology"/>
<reference key="1">
    <citation type="journal article" date="2003" name="Science">
        <title>Genome of Geobacter sulfurreducens: metal reduction in subsurface environments.</title>
        <authorList>
            <person name="Methe B.A."/>
            <person name="Nelson K.E."/>
            <person name="Eisen J.A."/>
            <person name="Paulsen I.T."/>
            <person name="Nelson W.C."/>
            <person name="Heidelberg J.F."/>
            <person name="Wu D."/>
            <person name="Wu M."/>
            <person name="Ward N.L."/>
            <person name="Beanan M.J."/>
            <person name="Dodson R.J."/>
            <person name="Madupu R."/>
            <person name="Brinkac L.M."/>
            <person name="Daugherty S.C."/>
            <person name="DeBoy R.T."/>
            <person name="Durkin A.S."/>
            <person name="Gwinn M.L."/>
            <person name="Kolonay J.F."/>
            <person name="Sullivan S.A."/>
            <person name="Haft D.H."/>
            <person name="Selengut J."/>
            <person name="Davidsen T.M."/>
            <person name="Zafar N."/>
            <person name="White O."/>
            <person name="Tran B."/>
            <person name="Romero C."/>
            <person name="Forberger H.A."/>
            <person name="Weidman J.F."/>
            <person name="Khouri H.M."/>
            <person name="Feldblyum T.V."/>
            <person name="Utterback T.R."/>
            <person name="Van Aken S.E."/>
            <person name="Lovley D.R."/>
            <person name="Fraser C.M."/>
        </authorList>
    </citation>
    <scope>NUCLEOTIDE SEQUENCE [LARGE SCALE GENOMIC DNA]</scope>
    <source>
        <strain>ATCC 51573 / DSM 12127 / PCA</strain>
    </source>
</reference>
<feature type="chain" id="PRO_0000265525" description="Transcription antitermination protein NusB">
    <location>
        <begin position="1"/>
        <end position="138"/>
    </location>
</feature>